<dbReference type="EC" id="4.2.1.1"/>
<dbReference type="EMBL" id="AB009049">
    <property type="protein sequence ID" value="BAB11260.1"/>
    <property type="status" value="ALT_SEQ"/>
    <property type="molecule type" value="Genomic_DNA"/>
</dbReference>
<dbReference type="EMBL" id="CP002688">
    <property type="protein sequence ID" value="AED96750.1"/>
    <property type="status" value="ALT_SEQ"/>
    <property type="molecule type" value="Genomic_DNA"/>
</dbReference>
<dbReference type="RefSeq" id="NP_200444.1">
    <property type="nucleotide sequence ID" value="NM_125016.2"/>
</dbReference>
<dbReference type="SMR" id="Q9FM99"/>
<dbReference type="FunCoup" id="Q9FM99">
    <property type="interactions" value="37"/>
</dbReference>
<dbReference type="STRING" id="3702.Q9FM99"/>
<dbReference type="GlyCosmos" id="Q9FM99">
    <property type="glycosylation" value="2 sites, No reported glycans"/>
</dbReference>
<dbReference type="GlyGen" id="Q9FM99">
    <property type="glycosylation" value="12 sites"/>
</dbReference>
<dbReference type="GeneID" id="835733"/>
<dbReference type="KEGG" id="ath:AT5G56330"/>
<dbReference type="Araport" id="AT5G56330"/>
<dbReference type="TAIR" id="AT5G56330">
    <property type="gene designation" value="ACA8"/>
</dbReference>
<dbReference type="HOGENOM" id="CLU_793084_0_0_1"/>
<dbReference type="InParanoid" id="Q9FM99"/>
<dbReference type="BioCyc" id="ARA:AT5G56330-MONOMER"/>
<dbReference type="PRO" id="PR:Q9FM99"/>
<dbReference type="Proteomes" id="UP000006548">
    <property type="component" value="Chromosome 5"/>
</dbReference>
<dbReference type="ExpressionAtlas" id="Q9FM99">
    <property type="expression patterns" value="baseline and differential"/>
</dbReference>
<dbReference type="GO" id="GO:0009570">
    <property type="term" value="C:chloroplast stroma"/>
    <property type="evidence" value="ECO:0007669"/>
    <property type="project" value="UniProtKB-SubCell"/>
</dbReference>
<dbReference type="GO" id="GO:0004089">
    <property type="term" value="F:carbonate dehydratase activity"/>
    <property type="evidence" value="ECO:0007669"/>
    <property type="project" value="UniProtKB-EC"/>
</dbReference>
<dbReference type="GO" id="GO:0016836">
    <property type="term" value="F:hydro-lyase activity"/>
    <property type="evidence" value="ECO:0000318"/>
    <property type="project" value="GO_Central"/>
</dbReference>
<dbReference type="GO" id="GO:0008270">
    <property type="term" value="F:zinc ion binding"/>
    <property type="evidence" value="ECO:0007669"/>
    <property type="project" value="InterPro"/>
</dbReference>
<dbReference type="CDD" id="cd03124">
    <property type="entry name" value="alpha_CA_prokaryotic_like"/>
    <property type="match status" value="1"/>
</dbReference>
<dbReference type="Gene3D" id="3.10.200.10">
    <property type="entry name" value="Alpha carbonic anhydrase"/>
    <property type="match status" value="1"/>
</dbReference>
<dbReference type="InterPro" id="IPR041891">
    <property type="entry name" value="Alpha_CA_prokaryot-like"/>
</dbReference>
<dbReference type="InterPro" id="IPR001148">
    <property type="entry name" value="CA_dom"/>
</dbReference>
<dbReference type="InterPro" id="IPR036398">
    <property type="entry name" value="CA_dom_sf"/>
</dbReference>
<dbReference type="InterPro" id="IPR023561">
    <property type="entry name" value="Carbonic_anhydrase_a-class"/>
</dbReference>
<dbReference type="PANTHER" id="PTHR18952:SF217">
    <property type="entry name" value="ALPHA CARBONIC ANHYDRASE 5-RELATED"/>
    <property type="match status" value="1"/>
</dbReference>
<dbReference type="PANTHER" id="PTHR18952">
    <property type="entry name" value="CARBONIC ANHYDRASE"/>
    <property type="match status" value="1"/>
</dbReference>
<dbReference type="Pfam" id="PF00194">
    <property type="entry name" value="Carb_anhydrase"/>
    <property type="match status" value="1"/>
</dbReference>
<dbReference type="PRINTS" id="PR01217">
    <property type="entry name" value="PRICHEXTENSN"/>
</dbReference>
<dbReference type="SMART" id="SM01057">
    <property type="entry name" value="Carb_anhydrase"/>
    <property type="match status" value="1"/>
</dbReference>
<dbReference type="SUPFAM" id="SSF51069">
    <property type="entry name" value="Carbonic anhydrase"/>
    <property type="match status" value="1"/>
</dbReference>
<dbReference type="PROSITE" id="PS51144">
    <property type="entry name" value="ALPHA_CA_2"/>
    <property type="match status" value="1"/>
</dbReference>
<organism>
    <name type="scientific">Arabidopsis thaliana</name>
    <name type="common">Mouse-ear cress</name>
    <dbReference type="NCBI Taxonomy" id="3702"/>
    <lineage>
        <taxon>Eukaryota</taxon>
        <taxon>Viridiplantae</taxon>
        <taxon>Streptophyta</taxon>
        <taxon>Embryophyta</taxon>
        <taxon>Tracheophyta</taxon>
        <taxon>Spermatophyta</taxon>
        <taxon>Magnoliopsida</taxon>
        <taxon>eudicotyledons</taxon>
        <taxon>Gunneridae</taxon>
        <taxon>Pentapetalae</taxon>
        <taxon>rosids</taxon>
        <taxon>malvids</taxon>
        <taxon>Brassicales</taxon>
        <taxon>Brassicaceae</taxon>
        <taxon>Camelineae</taxon>
        <taxon>Arabidopsis</taxon>
    </lineage>
</organism>
<evidence type="ECO:0000250" key="1"/>
<evidence type="ECO:0000255" key="2"/>
<evidence type="ECO:0000255" key="3">
    <source>
        <dbReference type="PROSITE-ProRule" id="PRU01134"/>
    </source>
</evidence>
<evidence type="ECO:0000256" key="4">
    <source>
        <dbReference type="SAM" id="MobiDB-lite"/>
    </source>
</evidence>
<evidence type="ECO:0000305" key="5"/>
<sequence length="389" mass="42567">MKISSLGWVLVLIFISITIVSSAPAPKPPKPKPAPAPTPPKPKPTPAPTPPKPKPKPAPTPPKPKPAPAPTPPKPKPAPAPTPPKPKPKPAPTPPNPKPTPAPTPPKPKPAPAPAPTPAPKPKPAPKPAPGGEVEDETEFSYETKGNKGPAKWGTLDAEWKMCGIGKMQSPIDLRDKNVVVSNKFGLLRSQYLPSNTTIKNRGHDIMLKFKGGNKGIGVTIRGTRYQLQQLHWHSPSEHTINGKRFALEEHLVHESKDKRYAVVAFLYNLGASDPFLFSLEKQLKKITDTHASEEHVGIIDPKKLSFESKHYYRYSGSLTAPPCSENVIWSVSKEIRTVSSKQVKLLRVAVHDASDSNARPLQAVNKRKVYLYKPKVKLMKKYCNISSY</sequence>
<comment type="function">
    <text evidence="1">Reversible hydration of carbon dioxide.</text>
</comment>
<comment type="catalytic activity">
    <reaction>
        <text>hydrogencarbonate + H(+) = CO2 + H2O</text>
        <dbReference type="Rhea" id="RHEA:10748"/>
        <dbReference type="ChEBI" id="CHEBI:15377"/>
        <dbReference type="ChEBI" id="CHEBI:15378"/>
        <dbReference type="ChEBI" id="CHEBI:16526"/>
        <dbReference type="ChEBI" id="CHEBI:17544"/>
        <dbReference type="EC" id="4.2.1.1"/>
    </reaction>
</comment>
<comment type="cofactor">
    <cofactor evidence="1">
        <name>Zn(2+)</name>
        <dbReference type="ChEBI" id="CHEBI:29105"/>
    </cofactor>
</comment>
<comment type="subcellular location">
    <subcellularLocation>
        <location evidence="1">Plastid</location>
        <location evidence="1">Chloroplast stroma</location>
    </subcellularLocation>
    <text evidence="1">Targeted to the chloroplast via a protein-targeting pathway that uses the secretory system.</text>
</comment>
<comment type="PTM">
    <text evidence="1">N-glycosylated.</text>
</comment>
<comment type="similarity">
    <text evidence="5">Belongs to the alpha-class carbonic anhydrase family.</text>
</comment>
<comment type="sequence caution" evidence="5">
    <conflict type="erroneous gene model prediction">
        <sequence resource="EMBL-CDS" id="AED96750"/>
    </conflict>
</comment>
<comment type="sequence caution" evidence="5">
    <conflict type="erroneous termination">
        <sequence resource="EMBL-CDS" id="AED96750"/>
    </conflict>
    <text>Truncated C-terminus.</text>
</comment>
<comment type="sequence caution" evidence="5">
    <conflict type="erroneous gene model prediction">
        <sequence resource="EMBL-CDS" id="BAB11260"/>
    </conflict>
</comment>
<comment type="sequence caution" evidence="5">
    <conflict type="erroneous termination">
        <sequence resource="EMBL-CDS" id="BAB11260"/>
    </conflict>
    <text>Truncated C-terminus.</text>
</comment>
<accession>Q9FM99</accession>
<keyword id="KW-0150">Chloroplast</keyword>
<keyword id="KW-1015">Disulfide bond</keyword>
<keyword id="KW-0325">Glycoprotein</keyword>
<keyword id="KW-0456">Lyase</keyword>
<keyword id="KW-0479">Metal-binding</keyword>
<keyword id="KW-0934">Plastid</keyword>
<keyword id="KW-1185">Reference proteome</keyword>
<keyword id="KW-0732">Signal</keyword>
<keyword id="KW-0862">Zinc</keyword>
<name>ATCA8_ARATH</name>
<proteinExistence type="inferred from homology"/>
<reference key="1">
    <citation type="journal article" date="1998" name="DNA Res.">
        <title>Structural analysis of Arabidopsis thaliana chromosome 5. IV. Sequence features of the regions of 1,456,315 bp covered by nineteen physically assigned P1 and TAC clones.</title>
        <authorList>
            <person name="Sato S."/>
            <person name="Kaneko T."/>
            <person name="Kotani H."/>
            <person name="Nakamura Y."/>
            <person name="Asamizu E."/>
            <person name="Miyajima N."/>
            <person name="Tabata S."/>
        </authorList>
    </citation>
    <scope>NUCLEOTIDE SEQUENCE [LARGE SCALE GENOMIC DNA]</scope>
    <source>
        <strain>cv. Columbia</strain>
    </source>
</reference>
<reference key="2">
    <citation type="journal article" date="2017" name="Plant J.">
        <title>Araport11: a complete reannotation of the Arabidopsis thaliana reference genome.</title>
        <authorList>
            <person name="Cheng C.Y."/>
            <person name="Krishnakumar V."/>
            <person name="Chan A.P."/>
            <person name="Thibaud-Nissen F."/>
            <person name="Schobel S."/>
            <person name="Town C.D."/>
        </authorList>
    </citation>
    <scope>GENOME REANNOTATION</scope>
    <source>
        <strain>cv. Columbia</strain>
    </source>
</reference>
<reference key="3">
    <citation type="journal article" date="2007" name="Plant Cell Environ.">
        <title>Characterization and expression analysis of genes encoding alpha and beta carbonic anhydrases in Arabidopsis.</title>
        <authorList>
            <person name="Fabre N."/>
            <person name="Reiter I.M."/>
            <person name="Becuwe-Linka N."/>
            <person name="Genty B."/>
            <person name="Rumeau D."/>
        </authorList>
    </citation>
    <scope>GENE FAMILY</scope>
    <scope>NOMENCLATURE</scope>
    <source>
        <strain>cv. Columbia</strain>
    </source>
</reference>
<gene>
    <name type="primary">ACA8</name>
    <name type="ordered locus">At5g56330</name>
    <name type="ORF">MCD7.6</name>
</gene>
<protein>
    <recommendedName>
        <fullName>Alpha carbonic anhydrase 8</fullName>
        <shortName>AtaCA8</shortName>
        <shortName>AtalphaCA8</shortName>
        <ecNumber>4.2.1.1</ecNumber>
    </recommendedName>
    <alternativeName>
        <fullName>Alpha carbonate dehydratase 8</fullName>
    </alternativeName>
</protein>
<feature type="signal peptide" evidence="2">
    <location>
        <begin position="1"/>
        <end position="22"/>
    </location>
</feature>
<feature type="chain" id="PRO_0000429734" description="Alpha carbonic anhydrase 8">
    <location>
        <begin position="23"/>
        <end position="389"/>
    </location>
</feature>
<feature type="domain" description="Alpha-carbonic anhydrase" evidence="3">
    <location>
        <begin position="138"/>
        <end position="374"/>
    </location>
</feature>
<feature type="region of interest" description="Disordered" evidence="4">
    <location>
        <begin position="21"/>
        <end position="153"/>
    </location>
</feature>
<feature type="compositionally biased region" description="Pro residues" evidence="4">
    <location>
        <begin position="25"/>
        <end position="129"/>
    </location>
</feature>
<feature type="active site" description="Proton acceptor" evidence="3">
    <location>
        <position position="204"/>
    </location>
</feature>
<feature type="binding site" evidence="3">
    <location>
        <position position="232"/>
    </location>
    <ligand>
        <name>Zn(2+)</name>
        <dbReference type="ChEBI" id="CHEBI:29105"/>
        <note>catalytic</note>
    </ligand>
</feature>
<feature type="binding site" evidence="3">
    <location>
        <position position="234"/>
    </location>
    <ligand>
        <name>Zn(2+)</name>
        <dbReference type="ChEBI" id="CHEBI:29105"/>
        <note>catalytic</note>
    </ligand>
</feature>
<feature type="binding site" evidence="3">
    <location>
        <position position="251"/>
    </location>
    <ligand>
        <name>Zn(2+)</name>
        <dbReference type="ChEBI" id="CHEBI:29105"/>
        <note>catalytic</note>
    </ligand>
</feature>
<feature type="binding site" evidence="1">
    <location>
        <begin position="320"/>
        <end position="321"/>
    </location>
    <ligand>
        <name>substrate</name>
    </ligand>
</feature>
<feature type="glycosylation site" description="N-linked (GlcNAc...) asparagine" evidence="2">
    <location>
        <position position="196"/>
    </location>
</feature>
<feature type="glycosylation site" description="N-linked (GlcNAc...) asparagine" evidence="2">
    <location>
        <position position="385"/>
    </location>
</feature>
<feature type="disulfide bond" evidence="1">
    <location>
        <begin position="163"/>
        <end position="324"/>
    </location>
</feature>